<comment type="function">
    <text>Involved in maceration and soft-rotting of plant tissue.</text>
</comment>
<comment type="catalytic activity">
    <reaction>
        <text>[(1-&gt;4)-alpha-D-galacturonosyl methyl ester](n) + n H2O = [(1-&gt;4)-alpha-D-galacturonosyl](n) + n methanol + n H(+)</text>
        <dbReference type="Rhea" id="RHEA:22380"/>
        <dbReference type="Rhea" id="RHEA-COMP:14570"/>
        <dbReference type="Rhea" id="RHEA-COMP:14573"/>
        <dbReference type="ChEBI" id="CHEBI:15377"/>
        <dbReference type="ChEBI" id="CHEBI:15378"/>
        <dbReference type="ChEBI" id="CHEBI:17790"/>
        <dbReference type="ChEBI" id="CHEBI:140522"/>
        <dbReference type="ChEBI" id="CHEBI:140523"/>
        <dbReference type="EC" id="3.1.1.11"/>
    </reaction>
</comment>
<comment type="pathway">
    <text>Glycan metabolism; pectin degradation; 2-dehydro-3-deoxy-D-gluconate from pectin: step 1/5.</text>
</comment>
<comment type="subcellular location">
    <subcellularLocation>
        <location>Secreted</location>
    </subcellularLocation>
</comment>
<comment type="similarity">
    <text evidence="4">Belongs to the pectinesterase family.</text>
</comment>
<organism>
    <name type="scientific">Ralstonia solanacearum</name>
    <name type="common">Pseudomonas solanacearum</name>
    <dbReference type="NCBI Taxonomy" id="305"/>
    <lineage>
        <taxon>Bacteria</taxon>
        <taxon>Pseudomonadati</taxon>
        <taxon>Pseudomonadota</taxon>
        <taxon>Betaproteobacteria</taxon>
        <taxon>Burkholderiales</taxon>
        <taxon>Burkholderiaceae</taxon>
        <taxon>Ralstonia</taxon>
        <taxon>Ralstonia solanacearum species complex</taxon>
    </lineage>
</organism>
<keyword id="KW-0063">Aspartyl esterase</keyword>
<keyword id="KW-0961">Cell wall biogenesis/degradation</keyword>
<keyword id="KW-0378">Hydrolase</keyword>
<keyword id="KW-0964">Secreted</keyword>
<keyword id="KW-0732">Signal</keyword>
<accession>P24791</accession>
<sequence>MQSTTLYLKTAAFLGGCSLFAATALAATSTATRPQLSNADARAYTIASYMASFGTIGSLTTDNWDPTGGVGAVSGFRANYAVAADGSAQYKTVQAAIDAAVADGGVARKYISVKAGTYNELVCVPESAPPITLYSLDANANNTVIVYNNANPTPASGAKTNPCMGTSSNATVGTVRSATAMVRASNFNARNLTFKNSYVEGTFADNNQSAVALAVRGDKAILENVSVIGNQDTLYLGATNNTMVIRAYFKNSFIQGDTDFIFGAGTAVFHGCTIQYTAARLGARATSYVFAPSTAPDNPHGFLAINSTFNATGNASNNSTHLGRAWDQGVSGTSAYINGSSPNGQVVIRDSSLGAHIRLADPWGPSTAGRPYCSSKCAYSANRFFEYNNTGAGSGN</sequence>
<evidence type="ECO:0000250" key="1"/>
<evidence type="ECO:0000255" key="2"/>
<evidence type="ECO:0000255" key="3">
    <source>
        <dbReference type="PROSITE-ProRule" id="PRU10040"/>
    </source>
</evidence>
<evidence type="ECO:0000305" key="4"/>
<proteinExistence type="inferred from homology"/>
<feature type="signal peptide" evidence="2">
    <location>
        <begin position="1"/>
        <end position="26"/>
    </location>
</feature>
<feature type="chain" id="PRO_0000023501" description="Pectinesterase">
    <location>
        <begin position="27"/>
        <end position="396"/>
    </location>
</feature>
<feature type="active site" description="Proton donor" evidence="3">
    <location>
        <position position="232"/>
    </location>
</feature>
<feature type="active site" description="Nucleophile" evidence="3">
    <location>
        <position position="259"/>
    </location>
</feature>
<feature type="binding site" evidence="1">
    <location>
        <position position="174"/>
    </location>
    <ligand>
        <name>substrate</name>
    </ligand>
</feature>
<feature type="binding site" evidence="1">
    <location>
        <position position="324"/>
    </location>
    <ligand>
        <name>substrate</name>
    </ligand>
</feature>
<feature type="binding site" evidence="1">
    <location>
        <position position="326"/>
    </location>
    <ligand>
        <name>substrate</name>
    </ligand>
</feature>
<feature type="site" description="Transition state stabilizer" evidence="1">
    <location>
        <position position="231"/>
    </location>
</feature>
<name>PME_RALSL</name>
<dbReference type="EC" id="3.1.1.11"/>
<dbReference type="EMBL" id="M62803">
    <property type="protein sequence ID" value="AAA25984.1"/>
    <property type="molecule type" value="Genomic_DNA"/>
</dbReference>
<dbReference type="PIR" id="A49747">
    <property type="entry name" value="A49747"/>
</dbReference>
<dbReference type="RefSeq" id="WP_003277586.1">
    <property type="nucleotide sequence ID" value="NZ_JAQYZH010000076.1"/>
</dbReference>
<dbReference type="SMR" id="P24791"/>
<dbReference type="UniPathway" id="UPA00545">
    <property type="reaction ID" value="UER00823"/>
</dbReference>
<dbReference type="GO" id="GO:0009279">
    <property type="term" value="C:cell outer membrane"/>
    <property type="evidence" value="ECO:0007669"/>
    <property type="project" value="TreeGrafter"/>
</dbReference>
<dbReference type="GO" id="GO:0005576">
    <property type="term" value="C:extracellular region"/>
    <property type="evidence" value="ECO:0007669"/>
    <property type="project" value="UniProtKB-SubCell"/>
</dbReference>
<dbReference type="GO" id="GO:0030599">
    <property type="term" value="F:pectinesterase activity"/>
    <property type="evidence" value="ECO:0007669"/>
    <property type="project" value="UniProtKB-EC"/>
</dbReference>
<dbReference type="GO" id="GO:0042545">
    <property type="term" value="P:cell wall modification"/>
    <property type="evidence" value="ECO:0007669"/>
    <property type="project" value="InterPro"/>
</dbReference>
<dbReference type="GO" id="GO:0045490">
    <property type="term" value="P:pectin catabolic process"/>
    <property type="evidence" value="ECO:0007669"/>
    <property type="project" value="UniProtKB-UniPathway"/>
</dbReference>
<dbReference type="Gene3D" id="2.160.20.10">
    <property type="entry name" value="Single-stranded right-handed beta-helix, Pectin lyase-like"/>
    <property type="match status" value="1"/>
</dbReference>
<dbReference type="InterPro" id="IPR012334">
    <property type="entry name" value="Pectin_lyas_fold"/>
</dbReference>
<dbReference type="InterPro" id="IPR011050">
    <property type="entry name" value="Pectin_lyase_fold/virulence"/>
</dbReference>
<dbReference type="InterPro" id="IPR033131">
    <property type="entry name" value="Pectinesterase_Asp_AS"/>
</dbReference>
<dbReference type="InterPro" id="IPR000070">
    <property type="entry name" value="Pectinesterase_cat"/>
</dbReference>
<dbReference type="NCBIfam" id="NF007822">
    <property type="entry name" value="PRK10531.1"/>
    <property type="match status" value="1"/>
</dbReference>
<dbReference type="PANTHER" id="PTHR31321">
    <property type="entry name" value="ACYL-COA THIOESTER HYDROLASE YBHC-RELATED"/>
    <property type="match status" value="1"/>
</dbReference>
<dbReference type="PANTHER" id="PTHR31321:SF57">
    <property type="entry name" value="PECTINESTERASE 53-RELATED"/>
    <property type="match status" value="1"/>
</dbReference>
<dbReference type="Pfam" id="PF01095">
    <property type="entry name" value="Pectinesterase"/>
    <property type="match status" value="1"/>
</dbReference>
<dbReference type="SUPFAM" id="SSF51126">
    <property type="entry name" value="Pectin lyase-like"/>
    <property type="match status" value="1"/>
</dbReference>
<dbReference type="PROSITE" id="PS00503">
    <property type="entry name" value="PECTINESTERASE_2"/>
    <property type="match status" value="1"/>
</dbReference>
<protein>
    <recommendedName>
        <fullName>Pectinesterase</fullName>
        <shortName>PE</shortName>
        <ecNumber>3.1.1.11</ecNumber>
    </recommendedName>
    <alternativeName>
        <fullName>Pectin methylesterase</fullName>
    </alternativeName>
</protein>
<gene>
    <name type="primary">pme</name>
</gene>
<reference key="1">
    <citation type="journal article" date="1991" name="J. Gen. Microbiol.">
        <title>Molecular cloning and sequencing of a pectinesterase gene from Pseudomonas solanacearum.</title>
        <authorList>
            <person name="Spoek A."/>
            <person name="Stubenrauch G."/>
            <person name="Schoergendorfer K."/>
            <person name="Schwab H."/>
        </authorList>
    </citation>
    <scope>NUCLEOTIDE SEQUENCE [GENOMIC DNA]</scope>
    <source>
        <strain>ATCC 15369 / DSM 50905 / ICPB PS 138</strain>
    </source>
</reference>